<accession>A2C5C9</accession>
<organism>
    <name type="scientific">Prochlorococcus marinus (strain NATL1A)</name>
    <dbReference type="NCBI Taxonomy" id="167555"/>
    <lineage>
        <taxon>Bacteria</taxon>
        <taxon>Bacillati</taxon>
        <taxon>Cyanobacteriota</taxon>
        <taxon>Cyanophyceae</taxon>
        <taxon>Synechococcales</taxon>
        <taxon>Prochlorococcaceae</taxon>
        <taxon>Prochlorococcus</taxon>
    </lineage>
</organism>
<feature type="chain" id="PRO_1000026023" description="Thiazole synthase">
    <location>
        <begin position="1"/>
        <end position="268"/>
    </location>
</feature>
<feature type="region of interest" description="Disordered" evidence="2">
    <location>
        <begin position="248"/>
        <end position="268"/>
    </location>
</feature>
<feature type="compositionally biased region" description="Polar residues" evidence="2">
    <location>
        <begin position="255"/>
        <end position="268"/>
    </location>
</feature>
<feature type="active site" description="Schiff-base intermediate with DXP" evidence="1">
    <location>
        <position position="108"/>
    </location>
</feature>
<feature type="binding site" evidence="1">
    <location>
        <position position="169"/>
    </location>
    <ligand>
        <name>1-deoxy-D-xylulose 5-phosphate</name>
        <dbReference type="ChEBI" id="CHEBI:57792"/>
    </ligand>
</feature>
<feature type="binding site" evidence="1">
    <location>
        <begin position="195"/>
        <end position="196"/>
    </location>
    <ligand>
        <name>1-deoxy-D-xylulose 5-phosphate</name>
        <dbReference type="ChEBI" id="CHEBI:57792"/>
    </ligand>
</feature>
<feature type="binding site" evidence="1">
    <location>
        <begin position="217"/>
        <end position="218"/>
    </location>
    <ligand>
        <name>1-deoxy-D-xylulose 5-phosphate</name>
        <dbReference type="ChEBI" id="CHEBI:57792"/>
    </ligand>
</feature>
<dbReference type="EC" id="2.8.1.10" evidence="1"/>
<dbReference type="EMBL" id="CP000553">
    <property type="protein sequence ID" value="ABM76689.1"/>
    <property type="molecule type" value="Genomic_DNA"/>
</dbReference>
<dbReference type="RefSeq" id="WP_011824629.1">
    <property type="nucleotide sequence ID" value="NC_008819.1"/>
</dbReference>
<dbReference type="SMR" id="A2C5C9"/>
<dbReference type="KEGG" id="pme:NATL1_21331"/>
<dbReference type="eggNOG" id="COG2022">
    <property type="taxonomic scope" value="Bacteria"/>
</dbReference>
<dbReference type="HOGENOM" id="CLU_062233_1_0_3"/>
<dbReference type="UniPathway" id="UPA00060"/>
<dbReference type="Proteomes" id="UP000002592">
    <property type="component" value="Chromosome"/>
</dbReference>
<dbReference type="GO" id="GO:0005737">
    <property type="term" value="C:cytoplasm"/>
    <property type="evidence" value="ECO:0007669"/>
    <property type="project" value="UniProtKB-SubCell"/>
</dbReference>
<dbReference type="GO" id="GO:1990107">
    <property type="term" value="F:thiazole synthase activity"/>
    <property type="evidence" value="ECO:0007669"/>
    <property type="project" value="UniProtKB-EC"/>
</dbReference>
<dbReference type="GO" id="GO:0009229">
    <property type="term" value="P:thiamine diphosphate biosynthetic process"/>
    <property type="evidence" value="ECO:0007669"/>
    <property type="project" value="UniProtKB-UniRule"/>
</dbReference>
<dbReference type="CDD" id="cd04728">
    <property type="entry name" value="ThiG"/>
    <property type="match status" value="1"/>
</dbReference>
<dbReference type="Gene3D" id="3.20.20.70">
    <property type="entry name" value="Aldolase class I"/>
    <property type="match status" value="1"/>
</dbReference>
<dbReference type="HAMAP" id="MF_00443">
    <property type="entry name" value="ThiG"/>
    <property type="match status" value="1"/>
</dbReference>
<dbReference type="InterPro" id="IPR013785">
    <property type="entry name" value="Aldolase_TIM"/>
</dbReference>
<dbReference type="InterPro" id="IPR033983">
    <property type="entry name" value="Thiazole_synthase_ThiG"/>
</dbReference>
<dbReference type="InterPro" id="IPR008867">
    <property type="entry name" value="ThiG"/>
</dbReference>
<dbReference type="PANTHER" id="PTHR34266">
    <property type="entry name" value="THIAZOLE SYNTHASE"/>
    <property type="match status" value="1"/>
</dbReference>
<dbReference type="PANTHER" id="PTHR34266:SF2">
    <property type="entry name" value="THIAZOLE SYNTHASE"/>
    <property type="match status" value="1"/>
</dbReference>
<dbReference type="Pfam" id="PF05690">
    <property type="entry name" value="ThiG"/>
    <property type="match status" value="1"/>
</dbReference>
<dbReference type="SUPFAM" id="SSF110399">
    <property type="entry name" value="ThiG-like"/>
    <property type="match status" value="1"/>
</dbReference>
<keyword id="KW-0963">Cytoplasm</keyword>
<keyword id="KW-0704">Schiff base</keyword>
<keyword id="KW-0784">Thiamine biosynthesis</keyword>
<keyword id="KW-0808">Transferase</keyword>
<gene>
    <name evidence="1" type="primary">thiG</name>
    <name type="ordered locus">NATL1_21331</name>
</gene>
<name>THIG_PROM1</name>
<comment type="function">
    <text evidence="1">Catalyzes the rearrangement of 1-deoxy-D-xylulose 5-phosphate (DXP) to produce the thiazole phosphate moiety of thiamine. Sulfur is provided by the thiocarboxylate moiety of the carrier protein ThiS. In vitro, sulfur can be provided by H(2)S.</text>
</comment>
<comment type="catalytic activity">
    <reaction evidence="1">
        <text>[ThiS sulfur-carrier protein]-C-terminal-Gly-aminoethanethioate + 2-iminoacetate + 1-deoxy-D-xylulose 5-phosphate = [ThiS sulfur-carrier protein]-C-terminal Gly-Gly + 2-[(2R,5Z)-2-carboxy-4-methylthiazol-5(2H)-ylidene]ethyl phosphate + 2 H2O + H(+)</text>
        <dbReference type="Rhea" id="RHEA:26297"/>
        <dbReference type="Rhea" id="RHEA-COMP:12909"/>
        <dbReference type="Rhea" id="RHEA-COMP:19908"/>
        <dbReference type="ChEBI" id="CHEBI:15377"/>
        <dbReference type="ChEBI" id="CHEBI:15378"/>
        <dbReference type="ChEBI" id="CHEBI:57792"/>
        <dbReference type="ChEBI" id="CHEBI:62899"/>
        <dbReference type="ChEBI" id="CHEBI:77846"/>
        <dbReference type="ChEBI" id="CHEBI:90778"/>
        <dbReference type="ChEBI" id="CHEBI:232372"/>
        <dbReference type="EC" id="2.8.1.10"/>
    </reaction>
</comment>
<comment type="pathway">
    <text evidence="1">Cofactor biosynthesis; thiamine diphosphate biosynthesis.</text>
</comment>
<comment type="subunit">
    <text evidence="1">Homotetramer. Forms heterodimers with either ThiH or ThiS.</text>
</comment>
<comment type="subcellular location">
    <subcellularLocation>
        <location evidence="1">Cytoplasm</location>
    </subcellularLocation>
</comment>
<comment type="similarity">
    <text evidence="1">Belongs to the ThiG family.</text>
</comment>
<proteinExistence type="inferred from homology"/>
<evidence type="ECO:0000255" key="1">
    <source>
        <dbReference type="HAMAP-Rule" id="MF_00443"/>
    </source>
</evidence>
<evidence type="ECO:0000256" key="2">
    <source>
        <dbReference type="SAM" id="MobiDB-lite"/>
    </source>
</evidence>
<protein>
    <recommendedName>
        <fullName evidence="1">Thiazole synthase</fullName>
        <ecNumber evidence="1">2.8.1.10</ecNumber>
    </recommendedName>
</protein>
<reference key="1">
    <citation type="journal article" date="2007" name="PLoS Genet.">
        <title>Patterns and implications of gene gain and loss in the evolution of Prochlorococcus.</title>
        <authorList>
            <person name="Kettler G.C."/>
            <person name="Martiny A.C."/>
            <person name="Huang K."/>
            <person name="Zucker J."/>
            <person name="Coleman M.L."/>
            <person name="Rodrigue S."/>
            <person name="Chen F."/>
            <person name="Lapidus A."/>
            <person name="Ferriera S."/>
            <person name="Johnson J."/>
            <person name="Steglich C."/>
            <person name="Church G.M."/>
            <person name="Richardson P."/>
            <person name="Chisholm S.W."/>
        </authorList>
    </citation>
    <scope>NUCLEOTIDE SEQUENCE [LARGE SCALE GENOMIC DNA]</scope>
    <source>
        <strain>NATL1A</strain>
    </source>
</reference>
<sequence length="268" mass="28729">MQKTNKFLKIGTKEFKSRLLVGTGKYSSLEVMQKSLINTKCEIVTVAVRRVQGLEHGHKGLMESIDWKRIWMLPNTAGCSNAEEAIRIAKLGRELAKLAGQENNNFVKLEVIPDKKYLLPDPIGTLKAAEQLVKEGFTVLPYINSDPLIAKQLEEIGCATVMPLGSPIGSAQGIRNAANIAMIIAESRIPIIIDAGIGVPSEAAQALEMGADGVLINSAIALAENPILMAQAFSKATEAGRDGYLSGRLKENPLASPSSPLEGVISNN</sequence>